<protein>
    <recommendedName>
        <fullName evidence="1">tRNA 5-methylaminomethyl-2-thiouridine biosynthesis bifunctional protein MnmC</fullName>
        <shortName evidence="1">tRNA mnm(5)s(2)U biosynthesis bifunctional protein</shortName>
    </recommendedName>
    <domain>
        <recommendedName>
            <fullName evidence="1">tRNA (mnm(5)s(2)U34)-methyltransferase</fullName>
            <ecNumber evidence="1">2.1.1.61</ecNumber>
        </recommendedName>
    </domain>
    <domain>
        <recommendedName>
            <fullName evidence="1">FAD-dependent cmnm(5)s(2)U34 oxidoreductase</fullName>
            <ecNumber evidence="1">1.5.-.-</ecNumber>
        </recommendedName>
    </domain>
</protein>
<name>MNMC_RALN1</name>
<sequence>MPRGLILATPQLPPDGTPFSARYDDVYHSTEGGLAQAHHVFLGGNGLPGGWQGKRSFTIVETGFGQGLNFLATWAAWRDDPQRCGRLDFVSVEKHPFDRAGLALVHAQEGALASLAEALRQAWPVPVPGVHRLVFDAGRVTLTLMLGDAETLLPQLSCAADAFYLDGFSPAKNPDLWQPGVFKQLARIARGGATLATYTAAGAVRHGLREAGFEVRKAPGFGRKRDMTVAAFPTHWRTRRGPAEAPVWPERHAIVLGAGLAGCSVAERLAARGWRITLIDEHEAPAGGASAHRAAAMHPHVSIDDSVLSRLSRAGNLLARRHWEALDRAGFATGFHPTGVLQLAEHADDAAEQQRIVQALGFPADFIAWLDAARAADRVGAGVPQGGWWFAQAGWVAPPDICRAALAAAGEAVELRWRTRIESLLRHDAGWRACDAQGNVIAHAPVVVLANSLDAVRLAPLASAALKPVRGQLTDVPVAALEDGVPWPRAVVCGDGYLLPRERGAPTVRVGSSFQPGETDPDARTADHAANLRRLAGLQPAHAAALARVDPARLLGYVGVRCVSANRLPLIGAVADEAAIMAPGFRLRGPHAALPRVPGLYAALAYGSRGLTWSVLGAELLAAQIDGGPLPLESELAAALDPGRFLMRALRHGKHAA</sequence>
<evidence type="ECO:0000255" key="1">
    <source>
        <dbReference type="HAMAP-Rule" id="MF_01102"/>
    </source>
</evidence>
<dbReference type="EC" id="2.1.1.61" evidence="1"/>
<dbReference type="EC" id="1.5.-.-" evidence="1"/>
<dbReference type="EMBL" id="AL646052">
    <property type="protein sequence ID" value="CAD15411.1"/>
    <property type="molecule type" value="Genomic_DNA"/>
</dbReference>
<dbReference type="RefSeq" id="WP_011001650.1">
    <property type="nucleotide sequence ID" value="NC_003295.1"/>
</dbReference>
<dbReference type="SMR" id="Q8XYP9"/>
<dbReference type="STRING" id="267608.RSc1709"/>
<dbReference type="EnsemblBacteria" id="CAD15411">
    <property type="protein sequence ID" value="CAD15411"/>
    <property type="gene ID" value="RSc1709"/>
</dbReference>
<dbReference type="KEGG" id="rso:RSc1709"/>
<dbReference type="PATRIC" id="fig|267608.8.peg.1752"/>
<dbReference type="eggNOG" id="COG0665">
    <property type="taxonomic scope" value="Bacteria"/>
</dbReference>
<dbReference type="eggNOG" id="COG4121">
    <property type="taxonomic scope" value="Bacteria"/>
</dbReference>
<dbReference type="HOGENOM" id="CLU_022427_1_0_4"/>
<dbReference type="Proteomes" id="UP000001436">
    <property type="component" value="Chromosome"/>
</dbReference>
<dbReference type="GO" id="GO:0005737">
    <property type="term" value="C:cytoplasm"/>
    <property type="evidence" value="ECO:0007669"/>
    <property type="project" value="UniProtKB-SubCell"/>
</dbReference>
<dbReference type="GO" id="GO:0050660">
    <property type="term" value="F:flavin adenine dinucleotide binding"/>
    <property type="evidence" value="ECO:0007669"/>
    <property type="project" value="UniProtKB-UniRule"/>
</dbReference>
<dbReference type="GO" id="GO:0016645">
    <property type="term" value="F:oxidoreductase activity, acting on the CH-NH group of donors"/>
    <property type="evidence" value="ECO:0007669"/>
    <property type="project" value="InterPro"/>
</dbReference>
<dbReference type="GO" id="GO:0004808">
    <property type="term" value="F:tRNA (5-methylaminomethyl-2-thiouridylate)(34)-methyltransferase activity"/>
    <property type="evidence" value="ECO:0007669"/>
    <property type="project" value="UniProtKB-EC"/>
</dbReference>
<dbReference type="GO" id="GO:0032259">
    <property type="term" value="P:methylation"/>
    <property type="evidence" value="ECO:0007669"/>
    <property type="project" value="UniProtKB-KW"/>
</dbReference>
<dbReference type="GO" id="GO:0002097">
    <property type="term" value="P:tRNA wobble base modification"/>
    <property type="evidence" value="ECO:0007669"/>
    <property type="project" value="UniProtKB-UniRule"/>
</dbReference>
<dbReference type="Gene3D" id="3.30.9.10">
    <property type="entry name" value="D-Amino Acid Oxidase, subunit A, domain 2"/>
    <property type="match status" value="1"/>
</dbReference>
<dbReference type="Gene3D" id="3.50.50.60">
    <property type="entry name" value="FAD/NAD(P)-binding domain"/>
    <property type="match status" value="1"/>
</dbReference>
<dbReference type="Gene3D" id="3.40.50.150">
    <property type="entry name" value="Vaccinia Virus protein VP39"/>
    <property type="match status" value="1"/>
</dbReference>
<dbReference type="HAMAP" id="MF_01102">
    <property type="entry name" value="MnmC"/>
    <property type="match status" value="1"/>
</dbReference>
<dbReference type="InterPro" id="IPR006076">
    <property type="entry name" value="FAD-dep_OxRdtase"/>
</dbReference>
<dbReference type="InterPro" id="IPR036188">
    <property type="entry name" value="FAD/NAD-bd_sf"/>
</dbReference>
<dbReference type="InterPro" id="IPR008471">
    <property type="entry name" value="MnmC-like_methylTransf"/>
</dbReference>
<dbReference type="InterPro" id="IPR029063">
    <property type="entry name" value="SAM-dependent_MTases_sf"/>
</dbReference>
<dbReference type="InterPro" id="IPR023032">
    <property type="entry name" value="tRNA_MAMT_biosynth_bifunc_MnmC"/>
</dbReference>
<dbReference type="InterPro" id="IPR047785">
    <property type="entry name" value="tRNA_MNMC2"/>
</dbReference>
<dbReference type="InterPro" id="IPR017610">
    <property type="entry name" value="tRNA_S-uridine_synth_MnmC_C"/>
</dbReference>
<dbReference type="NCBIfam" id="TIGR03197">
    <property type="entry name" value="MnmC_Cterm"/>
    <property type="match status" value="1"/>
</dbReference>
<dbReference type="NCBIfam" id="NF002481">
    <property type="entry name" value="PRK01747.1-2"/>
    <property type="match status" value="1"/>
</dbReference>
<dbReference type="NCBIfam" id="NF002483">
    <property type="entry name" value="PRK01747.1-4"/>
    <property type="match status" value="1"/>
</dbReference>
<dbReference type="NCBIfam" id="NF033855">
    <property type="entry name" value="tRNA_MNMC2"/>
    <property type="match status" value="1"/>
</dbReference>
<dbReference type="PANTHER" id="PTHR13847">
    <property type="entry name" value="SARCOSINE DEHYDROGENASE-RELATED"/>
    <property type="match status" value="1"/>
</dbReference>
<dbReference type="PANTHER" id="PTHR13847:SF283">
    <property type="entry name" value="TRNA 5-METHYLAMINOMETHYL-2-THIOURIDINE BIOSYNTHESIS BIFUNCTIONAL PROTEIN MNMC"/>
    <property type="match status" value="1"/>
</dbReference>
<dbReference type="Pfam" id="PF01266">
    <property type="entry name" value="DAO"/>
    <property type="match status" value="1"/>
</dbReference>
<dbReference type="Pfam" id="PF05430">
    <property type="entry name" value="Methyltransf_30"/>
    <property type="match status" value="1"/>
</dbReference>
<dbReference type="SUPFAM" id="SSF54373">
    <property type="entry name" value="FAD-linked reductases, C-terminal domain"/>
    <property type="match status" value="1"/>
</dbReference>
<dbReference type="SUPFAM" id="SSF51905">
    <property type="entry name" value="FAD/NAD(P)-binding domain"/>
    <property type="match status" value="1"/>
</dbReference>
<accession>Q8XYP9</accession>
<organism>
    <name type="scientific">Ralstonia nicotianae (strain ATCC BAA-1114 / GMI1000)</name>
    <name type="common">Ralstonia solanacearum</name>
    <dbReference type="NCBI Taxonomy" id="267608"/>
    <lineage>
        <taxon>Bacteria</taxon>
        <taxon>Pseudomonadati</taxon>
        <taxon>Pseudomonadota</taxon>
        <taxon>Betaproteobacteria</taxon>
        <taxon>Burkholderiales</taxon>
        <taxon>Burkholderiaceae</taxon>
        <taxon>Ralstonia</taxon>
        <taxon>Ralstonia solanacearum species complex</taxon>
    </lineage>
</organism>
<comment type="function">
    <text evidence="1">Catalyzes the last two steps in the biosynthesis of 5-methylaminomethyl-2-thiouridine (mnm(5)s(2)U) at the wobble position (U34) in tRNA. Catalyzes the FAD-dependent demodification of cmnm(5)s(2)U34 to nm(5)s(2)U34, followed by the transfer of a methyl group from S-adenosyl-L-methionine to nm(5)s(2)U34, to form mnm(5)s(2)U34.</text>
</comment>
<comment type="catalytic activity">
    <reaction evidence="1">
        <text>5-aminomethyl-2-thiouridine(34) in tRNA + S-adenosyl-L-methionine = 5-methylaminomethyl-2-thiouridine(34) in tRNA + S-adenosyl-L-homocysteine + H(+)</text>
        <dbReference type="Rhea" id="RHEA:19569"/>
        <dbReference type="Rhea" id="RHEA-COMP:10195"/>
        <dbReference type="Rhea" id="RHEA-COMP:10197"/>
        <dbReference type="ChEBI" id="CHEBI:15378"/>
        <dbReference type="ChEBI" id="CHEBI:57856"/>
        <dbReference type="ChEBI" id="CHEBI:59789"/>
        <dbReference type="ChEBI" id="CHEBI:74454"/>
        <dbReference type="ChEBI" id="CHEBI:74455"/>
        <dbReference type="EC" id="2.1.1.61"/>
    </reaction>
</comment>
<comment type="cofactor">
    <cofactor evidence="1">
        <name>FAD</name>
        <dbReference type="ChEBI" id="CHEBI:57692"/>
    </cofactor>
</comment>
<comment type="subcellular location">
    <subcellularLocation>
        <location evidence="1">Cytoplasm</location>
    </subcellularLocation>
</comment>
<comment type="similarity">
    <text evidence="1">In the N-terminal section; belongs to the methyltransferase superfamily. tRNA (mnm(5)s(2)U34)-methyltransferase family.</text>
</comment>
<comment type="similarity">
    <text evidence="1">In the C-terminal section; belongs to the DAO family.</text>
</comment>
<reference key="1">
    <citation type="journal article" date="2002" name="Nature">
        <title>Genome sequence of the plant pathogen Ralstonia solanacearum.</title>
        <authorList>
            <person name="Salanoubat M."/>
            <person name="Genin S."/>
            <person name="Artiguenave F."/>
            <person name="Gouzy J."/>
            <person name="Mangenot S."/>
            <person name="Arlat M."/>
            <person name="Billault A."/>
            <person name="Brottier P."/>
            <person name="Camus J.-C."/>
            <person name="Cattolico L."/>
            <person name="Chandler M."/>
            <person name="Choisne N."/>
            <person name="Claudel-Renard C."/>
            <person name="Cunnac S."/>
            <person name="Demange N."/>
            <person name="Gaspin C."/>
            <person name="Lavie M."/>
            <person name="Moisan A."/>
            <person name="Robert C."/>
            <person name="Saurin W."/>
            <person name="Schiex T."/>
            <person name="Siguier P."/>
            <person name="Thebault P."/>
            <person name="Whalen M."/>
            <person name="Wincker P."/>
            <person name="Levy M."/>
            <person name="Weissenbach J."/>
            <person name="Boucher C.A."/>
        </authorList>
    </citation>
    <scope>NUCLEOTIDE SEQUENCE [LARGE SCALE GENOMIC DNA]</scope>
    <source>
        <strain>ATCC BAA-1114 / GMI1000</strain>
    </source>
</reference>
<keyword id="KW-0963">Cytoplasm</keyword>
<keyword id="KW-0274">FAD</keyword>
<keyword id="KW-0285">Flavoprotein</keyword>
<keyword id="KW-0489">Methyltransferase</keyword>
<keyword id="KW-0511">Multifunctional enzyme</keyword>
<keyword id="KW-0560">Oxidoreductase</keyword>
<keyword id="KW-1185">Reference proteome</keyword>
<keyword id="KW-0949">S-adenosyl-L-methionine</keyword>
<keyword id="KW-0808">Transferase</keyword>
<keyword id="KW-0819">tRNA processing</keyword>
<proteinExistence type="inferred from homology"/>
<gene>
    <name evidence="1" type="primary">mnmC</name>
    <name type="ordered locus">RSc1709</name>
    <name type="ORF">RS02895</name>
</gene>
<feature type="chain" id="PRO_0000095024" description="tRNA 5-methylaminomethyl-2-thiouridine biosynthesis bifunctional protein MnmC">
    <location>
        <begin position="1"/>
        <end position="657"/>
    </location>
</feature>
<feature type="region of interest" description="tRNA (mnm(5)s(2)U34)-methyltransferase">
    <location>
        <begin position="1"/>
        <end position="233"/>
    </location>
</feature>
<feature type="region of interest" description="FAD-dependent cmnm(5)s(2)U34 oxidoreductase">
    <location>
        <begin position="256"/>
        <end position="657"/>
    </location>
</feature>